<gene>
    <name type="primary">SCAR4</name>
    <name type="ordered locus">At5g01730</name>
    <name type="ORF">F7A7.250</name>
</gene>
<reference key="1">
    <citation type="journal article" date="2004" name="Proc. Natl. Acad. Sci. U.S.A.">
        <title>Activation of Arp2/3 complex-dependent actin polymerization by plant proteins distantly related to Scar/WAVE.</title>
        <authorList>
            <person name="Frank M."/>
            <person name="Egile C."/>
            <person name="Dyachok J."/>
            <person name="Djakovic S."/>
            <person name="Nolasco M."/>
            <person name="Li R."/>
            <person name="Smith L.G."/>
        </authorList>
    </citation>
    <scope>NUCLEOTIDE SEQUENCE [MRNA]</scope>
    <scope>TISSUE SPECIFICITY</scope>
</reference>
<reference key="2">
    <citation type="journal article" date="2000" name="Nature">
        <title>Sequence and analysis of chromosome 5 of the plant Arabidopsis thaliana.</title>
        <authorList>
            <person name="Tabata S."/>
            <person name="Kaneko T."/>
            <person name="Nakamura Y."/>
            <person name="Kotani H."/>
            <person name="Kato T."/>
            <person name="Asamizu E."/>
            <person name="Miyajima N."/>
            <person name="Sasamoto S."/>
            <person name="Kimura T."/>
            <person name="Hosouchi T."/>
            <person name="Kawashima K."/>
            <person name="Kohara M."/>
            <person name="Matsumoto M."/>
            <person name="Matsuno A."/>
            <person name="Muraki A."/>
            <person name="Nakayama S."/>
            <person name="Nakazaki N."/>
            <person name="Naruo K."/>
            <person name="Okumura S."/>
            <person name="Shinpo S."/>
            <person name="Takeuchi C."/>
            <person name="Wada T."/>
            <person name="Watanabe A."/>
            <person name="Yamada M."/>
            <person name="Yasuda M."/>
            <person name="Sato S."/>
            <person name="de la Bastide M."/>
            <person name="Huang E."/>
            <person name="Spiegel L."/>
            <person name="Gnoj L."/>
            <person name="O'Shaughnessy A."/>
            <person name="Preston R."/>
            <person name="Habermann K."/>
            <person name="Murray J."/>
            <person name="Johnson D."/>
            <person name="Rohlfing T."/>
            <person name="Nelson J."/>
            <person name="Stoneking T."/>
            <person name="Pepin K."/>
            <person name="Spieth J."/>
            <person name="Sekhon M."/>
            <person name="Armstrong J."/>
            <person name="Becker M."/>
            <person name="Belter E."/>
            <person name="Cordum H."/>
            <person name="Cordes M."/>
            <person name="Courtney L."/>
            <person name="Courtney W."/>
            <person name="Dante M."/>
            <person name="Du H."/>
            <person name="Edwards J."/>
            <person name="Fryman J."/>
            <person name="Haakensen B."/>
            <person name="Lamar E."/>
            <person name="Latreille P."/>
            <person name="Leonard S."/>
            <person name="Meyer R."/>
            <person name="Mulvaney E."/>
            <person name="Ozersky P."/>
            <person name="Riley A."/>
            <person name="Strowmatt C."/>
            <person name="Wagner-McPherson C."/>
            <person name="Wollam A."/>
            <person name="Yoakum M."/>
            <person name="Bell M."/>
            <person name="Dedhia N."/>
            <person name="Parnell L."/>
            <person name="Shah R."/>
            <person name="Rodriguez M."/>
            <person name="Hoon See L."/>
            <person name="Vil D."/>
            <person name="Baker J."/>
            <person name="Kirchoff K."/>
            <person name="Toth K."/>
            <person name="King L."/>
            <person name="Bahret A."/>
            <person name="Miller B."/>
            <person name="Marra M.A."/>
            <person name="Martienssen R."/>
            <person name="McCombie W.R."/>
            <person name="Wilson R.K."/>
            <person name="Murphy G."/>
            <person name="Bancroft I."/>
            <person name="Volckaert G."/>
            <person name="Wambutt R."/>
            <person name="Duesterhoeft A."/>
            <person name="Stiekema W."/>
            <person name="Pohl T."/>
            <person name="Entian K.-D."/>
            <person name="Terryn N."/>
            <person name="Hartley N."/>
            <person name="Bent E."/>
            <person name="Johnson S."/>
            <person name="Langham S.-A."/>
            <person name="McCullagh B."/>
            <person name="Robben J."/>
            <person name="Grymonprez B."/>
            <person name="Zimmermann W."/>
            <person name="Ramsperger U."/>
            <person name="Wedler H."/>
            <person name="Balke K."/>
            <person name="Wedler E."/>
            <person name="Peters S."/>
            <person name="van Staveren M."/>
            <person name="Dirkse W."/>
            <person name="Mooijman P."/>
            <person name="Klein Lankhorst R."/>
            <person name="Weitzenegger T."/>
            <person name="Bothe G."/>
            <person name="Rose M."/>
            <person name="Hauf J."/>
            <person name="Berneiser S."/>
            <person name="Hempel S."/>
            <person name="Feldpausch M."/>
            <person name="Lamberth S."/>
            <person name="Villarroel R."/>
            <person name="Gielen J."/>
            <person name="Ardiles W."/>
            <person name="Bents O."/>
            <person name="Lemcke K."/>
            <person name="Kolesov G."/>
            <person name="Mayer K.F.X."/>
            <person name="Rudd S."/>
            <person name="Schoof H."/>
            <person name="Schueller C."/>
            <person name="Zaccaria P."/>
            <person name="Mewes H.-W."/>
            <person name="Bevan M."/>
            <person name="Fransz P.F."/>
        </authorList>
    </citation>
    <scope>NUCLEOTIDE SEQUENCE [LARGE SCALE GENOMIC DNA]</scope>
    <source>
        <strain>cv. Columbia</strain>
    </source>
</reference>
<reference key="3">
    <citation type="journal article" date="2017" name="Plant J.">
        <title>Araport11: a complete reannotation of the Arabidopsis thaliana reference genome.</title>
        <authorList>
            <person name="Cheng C.Y."/>
            <person name="Krishnakumar V."/>
            <person name="Chan A.P."/>
            <person name="Thibaud-Nissen F."/>
            <person name="Schobel S."/>
            <person name="Town C.D."/>
        </authorList>
    </citation>
    <scope>GENOME REANNOTATION</scope>
    <source>
        <strain>cv. Columbia</strain>
    </source>
</reference>
<reference key="4">
    <citation type="journal article" date="2004" name="Plant Cell">
        <title>NAPP and PIRP encode subunits of a putative wave regulatory protein complex involved in plant cell morphogenesis.</title>
        <authorList>
            <person name="Brembu T."/>
            <person name="Winge P."/>
            <person name="Seem M."/>
            <person name="Bones A.M."/>
        </authorList>
    </citation>
    <scope>FUNCTION</scope>
    <scope>IDENTIFICATION</scope>
</reference>
<reference key="5">
    <citation type="journal article" date="2007" name="Development">
        <title>The role of Arabidopsis SCAR genes in ARP2-ARP3-dependent cell morphogenesis.</title>
        <authorList>
            <person name="Uhrig J.F."/>
            <person name="Mutondo M."/>
            <person name="Zimmermann I."/>
            <person name="Deeks M.J."/>
            <person name="Machesky L.M."/>
            <person name="Thomas P."/>
            <person name="Uhrig S."/>
            <person name="Rambke C."/>
            <person name="Hussey P.J."/>
            <person name="Huelskamp M."/>
        </authorList>
    </citation>
    <scope>INTERACTION WITH SPK1</scope>
</reference>
<evidence type="ECO:0000256" key="1">
    <source>
        <dbReference type="SAM" id="MobiDB-lite"/>
    </source>
</evidence>
<evidence type="ECO:0000269" key="2">
    <source>
    </source>
</evidence>
<evidence type="ECO:0000269" key="3">
    <source>
    </source>
</evidence>
<evidence type="ECO:0000269" key="4">
    <source>
    </source>
</evidence>
<evidence type="ECO:0000305" key="5"/>
<dbReference type="EMBL" id="AY743927">
    <property type="protein sequence ID" value="AAU93852.1"/>
    <property type="molecule type" value="mRNA"/>
</dbReference>
<dbReference type="EMBL" id="AL161946">
    <property type="protein sequence ID" value="CAB82289.1"/>
    <property type="status" value="ALT_SEQ"/>
    <property type="molecule type" value="Genomic_DNA"/>
</dbReference>
<dbReference type="EMBL" id="CP002688">
    <property type="protein sequence ID" value="AED90383.1"/>
    <property type="molecule type" value="Genomic_DNA"/>
</dbReference>
<dbReference type="EMBL" id="CP002688">
    <property type="protein sequence ID" value="ANM68918.1"/>
    <property type="molecule type" value="Genomic_DNA"/>
</dbReference>
<dbReference type="PIR" id="T48194">
    <property type="entry name" value="T48194"/>
</dbReference>
<dbReference type="RefSeq" id="NP_001318456.1">
    <property type="nucleotide sequence ID" value="NM_001342607.1"/>
</dbReference>
<dbReference type="RefSeq" id="NP_195793.3">
    <property type="nucleotide sequence ID" value="NM_120251.4"/>
</dbReference>
<dbReference type="BioGRID" id="16963">
    <property type="interactions" value="3"/>
</dbReference>
<dbReference type="IntAct" id="Q5XPJ6">
    <property type="interactions" value="3"/>
</dbReference>
<dbReference type="STRING" id="3702.Q5XPJ6"/>
<dbReference type="iPTMnet" id="Q5XPJ6"/>
<dbReference type="PaxDb" id="3702-AT5G01730.1"/>
<dbReference type="ProteomicsDB" id="232961"/>
<dbReference type="EnsemblPlants" id="AT5G01730.1">
    <property type="protein sequence ID" value="AT5G01730.1"/>
    <property type="gene ID" value="AT5G01730"/>
</dbReference>
<dbReference type="EnsemblPlants" id="AT5G01730.4">
    <property type="protein sequence ID" value="AT5G01730.4"/>
    <property type="gene ID" value="AT5G01730"/>
</dbReference>
<dbReference type="GeneID" id="831687"/>
<dbReference type="Gramene" id="AT5G01730.1">
    <property type="protein sequence ID" value="AT5G01730.1"/>
    <property type="gene ID" value="AT5G01730"/>
</dbReference>
<dbReference type="Gramene" id="AT5G01730.4">
    <property type="protein sequence ID" value="AT5G01730.4"/>
    <property type="gene ID" value="AT5G01730"/>
</dbReference>
<dbReference type="KEGG" id="ath:AT5G01730"/>
<dbReference type="Araport" id="AT5G01730"/>
<dbReference type="TAIR" id="AT5G01730">
    <property type="gene designation" value="SCAR4"/>
</dbReference>
<dbReference type="eggNOG" id="ENOG502RRIC">
    <property type="taxonomic scope" value="Eukaryota"/>
</dbReference>
<dbReference type="HOGENOM" id="CLU_274211_0_0_1"/>
<dbReference type="InParanoid" id="Q5XPJ6"/>
<dbReference type="OrthoDB" id="1929108at2759"/>
<dbReference type="PhylomeDB" id="Q5XPJ6"/>
<dbReference type="PRO" id="PR:Q5XPJ6"/>
<dbReference type="Proteomes" id="UP000006548">
    <property type="component" value="Chromosome 5"/>
</dbReference>
<dbReference type="ExpressionAtlas" id="Q5XPJ6">
    <property type="expression patterns" value="baseline and differential"/>
</dbReference>
<dbReference type="GO" id="GO:0009507">
    <property type="term" value="C:chloroplast"/>
    <property type="evidence" value="ECO:0007005"/>
    <property type="project" value="TAIR"/>
</dbReference>
<dbReference type="GO" id="GO:0005856">
    <property type="term" value="C:cytoskeleton"/>
    <property type="evidence" value="ECO:0007669"/>
    <property type="project" value="UniProtKB-SubCell"/>
</dbReference>
<dbReference type="GO" id="GO:0010287">
    <property type="term" value="C:plastoglobule"/>
    <property type="evidence" value="ECO:0007005"/>
    <property type="project" value="TAIR"/>
</dbReference>
<dbReference type="GO" id="GO:0031209">
    <property type="term" value="C:SCAR complex"/>
    <property type="evidence" value="ECO:0000304"/>
    <property type="project" value="TAIR"/>
</dbReference>
<dbReference type="GO" id="GO:0003779">
    <property type="term" value="F:actin binding"/>
    <property type="evidence" value="ECO:0007669"/>
    <property type="project" value="UniProtKB-KW"/>
</dbReference>
<dbReference type="GO" id="GO:0030036">
    <property type="term" value="P:actin cytoskeleton organization"/>
    <property type="evidence" value="ECO:0007669"/>
    <property type="project" value="InterPro"/>
</dbReference>
<dbReference type="GO" id="GO:0051127">
    <property type="term" value="P:positive regulation of actin nucleation"/>
    <property type="evidence" value="ECO:0000315"/>
    <property type="project" value="TAIR"/>
</dbReference>
<dbReference type="FunFam" id="1.20.5.340:FF:000045">
    <property type="entry name" value="SCAR family protein"/>
    <property type="match status" value="1"/>
</dbReference>
<dbReference type="Gene3D" id="1.20.5.340">
    <property type="match status" value="1"/>
</dbReference>
<dbReference type="Gene3D" id="6.10.280.150">
    <property type="match status" value="2"/>
</dbReference>
<dbReference type="InterPro" id="IPR028288">
    <property type="entry name" value="SCAR/WAVE_fam"/>
</dbReference>
<dbReference type="PANTHER" id="PTHR12902:SF32">
    <property type="entry name" value="PROTEIN SCAR4"/>
    <property type="match status" value="1"/>
</dbReference>
<dbReference type="PANTHER" id="PTHR12902">
    <property type="entry name" value="WASP-1"/>
    <property type="match status" value="1"/>
</dbReference>
<sequence>MALTRYQIRNEYGLADKELYQSADKEDPEALLEAASMAGLVGVLRQLGDLSEFAAEVFHCLHEQLMTTAARGHGLAMRLQHLEADFPSVEIPILSQTDHSTFFYEPGLEWHSDLQTKEDLISPRNLPRCIMDSYEECHGPPQLFLLDKFDVAGSGSCLKRYSDPSLLKTHTTSAVVATSKLGKDKRLRQSKKKGSHTTIKETPEDSRTSHAKLHQLFFLEHVENGHRNPEFHVKLKRRQLNGPPINSSSGASYMEKFLKNSSPYCERVHGTMDQSSPAMETEVTVCSEQEDLPIPSLVYSNSGGTRKYNEMEIESIAGHEILEIPFVPHEITVNEKSPVVCLESSSSVNLCCKTNNDADSPASTESEVKEAGSDDKAGCDHGFPGFGQPQICTNAEVNQTEVLTQFSNVLRHSPEEGESSLLCTDIQRASPESKPHKAEEAAVDLDESFSQMTPDIDSAGMGTLEILQTPFSLSCYESPANLPEDSGSHLELQSNKANAEACEVFEVRRDPMLNISPETHLLKVTQVPQDAYEGGTNDVHSQHVFSVETASEISVSALVEDQFSSITNQEIEALESEDISSEAGHFIPDTKKSLNETSVALESDFLLPNHYISTFDNFEDLSLSADAQDYAAPKEDETNSQDGSSMNPAQSKHISTSEISSENGTLMSDTPRDLHTGYGSLSASSCLEDGLANPDLAEISSYSGQEDPQTMSIVSDDSSDPEVPIPDGTCFAGDVDHDNQTGLNNKAIETVPQKELETISDPQESLLGTEECLSSEYCLQIQNQRQESPSETGSANSRTSSDESPPTQNGSVGVQSSPLDVFPSSITEIEALHAPYQEIFTSLNDHISESVLSKGLTDEEDFLNVSPESILPLSTSLHETPQANPEITPPLPPLPPTQWWMGKLVESTEMPSLAGSGNNSFNIQRDENTQNGSVQANEAQYPSEVSVTDGENHNFHIYTEESKATEEQSPSGVNGTSDTYMESKHKCLNRTPEDSFSLAESAQGLEADWRTEAMALEWFSQNLREHNNPHPAKLEEEEPQVDHPLEKPGQTKFRQTLRDNNSYNQNQKAGKLKRDEDTLVIGIDRSMLRKVSEGNRTHVGARVDENDSLLEIIRSKSFNLRPADASGRPNFQVAVPKTNLKVAAILEKANTLRQAMAGSDDEHDSDSWSE</sequence>
<comment type="function">
    <text evidence="2">Involved in regulation of actin and microtubule organization. Part of a WAVE complex that activates the Arp2/3 complex. Regulates trichome branch positioning and expansion.</text>
</comment>
<comment type="subunit">
    <text evidence="4">Interacts with SPK1.</text>
</comment>
<comment type="subcellular location">
    <subcellularLocation>
        <location>Cytoplasm</location>
        <location>Cytoskeleton</location>
    </subcellularLocation>
</comment>
<comment type="tissue specificity">
    <text evidence="3">Expressed in expanding cotyledons, expanding leaves and expanding siliques containing developing embryos. Detected in unopened flower buds and in the expanding tip region of roots. Reduced expression in mature leaves.</text>
</comment>
<comment type="domain">
    <text>Activates the Arp2/3 complex and binds actin through the C-terminal VCA (verprolin homology/cofilin homology/acidic) domain consisting of a WH2 domain followed by an Arp2/3-binding acidic motif (A), separated by a conserved linker region (C). Binds BRK1 through the N-terminal Scar homology domain (SHD).</text>
</comment>
<comment type="similarity">
    <text evidence="5">Belongs to the SCAR/WAVE family.</text>
</comment>
<comment type="sequence caution" evidence="5">
    <conflict type="erroneous gene model prediction">
        <sequence resource="EMBL-CDS" id="CAB82289"/>
    </conflict>
</comment>
<proteinExistence type="evidence at protein level"/>
<name>SCAR4_ARATH</name>
<organism>
    <name type="scientific">Arabidopsis thaliana</name>
    <name type="common">Mouse-ear cress</name>
    <dbReference type="NCBI Taxonomy" id="3702"/>
    <lineage>
        <taxon>Eukaryota</taxon>
        <taxon>Viridiplantae</taxon>
        <taxon>Streptophyta</taxon>
        <taxon>Embryophyta</taxon>
        <taxon>Tracheophyta</taxon>
        <taxon>Spermatophyta</taxon>
        <taxon>Magnoliopsida</taxon>
        <taxon>eudicotyledons</taxon>
        <taxon>Gunneridae</taxon>
        <taxon>Pentapetalae</taxon>
        <taxon>rosids</taxon>
        <taxon>malvids</taxon>
        <taxon>Brassicales</taxon>
        <taxon>Brassicaceae</taxon>
        <taxon>Camelineae</taxon>
        <taxon>Arabidopsis</taxon>
    </lineage>
</organism>
<feature type="chain" id="PRO_0000189007" description="Protein SCAR4">
    <location>
        <begin position="1"/>
        <end position="1170"/>
    </location>
</feature>
<feature type="domain" description="WH2">
    <location>
        <begin position="1105"/>
        <end position="1123"/>
    </location>
</feature>
<feature type="region of interest" description="Disordered" evidence="1">
    <location>
        <begin position="180"/>
        <end position="207"/>
    </location>
</feature>
<feature type="region of interest" description="Disordered" evidence="1">
    <location>
        <begin position="356"/>
        <end position="376"/>
    </location>
</feature>
<feature type="region of interest" description="Disordered" evidence="1">
    <location>
        <begin position="631"/>
        <end position="674"/>
    </location>
</feature>
<feature type="region of interest" description="Disordered" evidence="1">
    <location>
        <begin position="701"/>
        <end position="742"/>
    </location>
</feature>
<feature type="region of interest" description="Disordered" evidence="1">
    <location>
        <begin position="783"/>
        <end position="819"/>
    </location>
</feature>
<feature type="region of interest" description="Disordered" evidence="1">
    <location>
        <begin position="960"/>
        <end position="980"/>
    </location>
</feature>
<feature type="region of interest" description="Disordered" evidence="1">
    <location>
        <begin position="1026"/>
        <end position="1046"/>
    </location>
</feature>
<feature type="compositionally biased region" description="Basic residues" evidence="1">
    <location>
        <begin position="183"/>
        <end position="195"/>
    </location>
</feature>
<feature type="compositionally biased region" description="Basic and acidic residues" evidence="1">
    <location>
        <begin position="198"/>
        <end position="207"/>
    </location>
</feature>
<feature type="compositionally biased region" description="Polar residues" evidence="1">
    <location>
        <begin position="356"/>
        <end position="365"/>
    </location>
</feature>
<feature type="compositionally biased region" description="Basic and acidic residues" evidence="1">
    <location>
        <begin position="366"/>
        <end position="376"/>
    </location>
</feature>
<feature type="compositionally biased region" description="Polar residues" evidence="1">
    <location>
        <begin position="640"/>
        <end position="668"/>
    </location>
</feature>
<feature type="compositionally biased region" description="Polar residues" evidence="1">
    <location>
        <begin position="701"/>
        <end position="716"/>
    </location>
</feature>
<feature type="compositionally biased region" description="Polar residues" evidence="1">
    <location>
        <begin position="783"/>
        <end position="818"/>
    </location>
</feature>
<feature type="compositionally biased region" description="Polar residues" evidence="1">
    <location>
        <begin position="967"/>
        <end position="980"/>
    </location>
</feature>
<keyword id="KW-0009">Actin-binding</keyword>
<keyword id="KW-0963">Cytoplasm</keyword>
<keyword id="KW-0206">Cytoskeleton</keyword>
<keyword id="KW-1185">Reference proteome</keyword>
<accession>Q5XPJ6</accession>
<accession>Q9LCZ7</accession>
<protein>
    <recommendedName>
        <fullName>Protein SCAR4</fullName>
        <shortName>AtSCAR4</shortName>
    </recommendedName>
    <alternativeName>
        <fullName>Protein WAVE3</fullName>
    </alternativeName>
</protein>